<evidence type="ECO:0000255" key="1">
    <source>
        <dbReference type="HAMAP-Rule" id="MF_01302"/>
    </source>
</evidence>
<evidence type="ECO:0000305" key="2"/>
<comment type="function">
    <text evidence="1">One of the primary rRNA binding proteins, it binds directly to 16S rRNA central domain where it helps coordinate assembly of the platform of the 30S subunit.</text>
</comment>
<comment type="subunit">
    <text evidence="1">Part of the 30S ribosomal subunit. Contacts proteins S5 and S12.</text>
</comment>
<comment type="similarity">
    <text evidence="1">Belongs to the universal ribosomal protein uS8 family.</text>
</comment>
<accession>Q17ZC5</accession>
<proteinExistence type="inferred from homology"/>
<organism>
    <name type="scientific">Helicobacter acinonychis (strain Sheeba)</name>
    <dbReference type="NCBI Taxonomy" id="382638"/>
    <lineage>
        <taxon>Bacteria</taxon>
        <taxon>Pseudomonadati</taxon>
        <taxon>Campylobacterota</taxon>
        <taxon>Epsilonproteobacteria</taxon>
        <taxon>Campylobacterales</taxon>
        <taxon>Helicobacteraceae</taxon>
        <taxon>Helicobacter</taxon>
    </lineage>
</organism>
<sequence length="131" mass="15224">MVNDIIADSLTRLRNASMRRLEFTQLYYAKIVVSILEIFKEKGFIKDFNIKDKDKKQSVYVQLAYDEKGYSKISEVKRLSKPGRRVYKQKNELKRFKNGYGVIVVSTSKGVITNEEAYRQNVGGEVLCSIW</sequence>
<protein>
    <recommendedName>
        <fullName evidence="1">Small ribosomal subunit protein uS8</fullName>
    </recommendedName>
    <alternativeName>
        <fullName evidence="2">30S ribosomal protein S8</fullName>
    </alternativeName>
</protein>
<dbReference type="EMBL" id="AM260522">
    <property type="protein sequence ID" value="CAJ99001.1"/>
    <property type="molecule type" value="Genomic_DNA"/>
</dbReference>
<dbReference type="RefSeq" id="WP_011577119.1">
    <property type="nucleotide sequence ID" value="NC_008229.1"/>
</dbReference>
<dbReference type="SMR" id="Q17ZC5"/>
<dbReference type="STRING" id="382638.Hac_0149"/>
<dbReference type="GeneID" id="31757679"/>
<dbReference type="KEGG" id="hac:Hac_0149"/>
<dbReference type="eggNOG" id="COG0096">
    <property type="taxonomic scope" value="Bacteria"/>
</dbReference>
<dbReference type="HOGENOM" id="CLU_098428_0_2_7"/>
<dbReference type="OrthoDB" id="9802617at2"/>
<dbReference type="BioCyc" id="HACI382638:HAC_RS00650-MONOMER"/>
<dbReference type="Proteomes" id="UP000000775">
    <property type="component" value="Chromosome"/>
</dbReference>
<dbReference type="GO" id="GO:1990904">
    <property type="term" value="C:ribonucleoprotein complex"/>
    <property type="evidence" value="ECO:0007669"/>
    <property type="project" value="UniProtKB-KW"/>
</dbReference>
<dbReference type="GO" id="GO:0005840">
    <property type="term" value="C:ribosome"/>
    <property type="evidence" value="ECO:0007669"/>
    <property type="project" value="UniProtKB-KW"/>
</dbReference>
<dbReference type="GO" id="GO:0019843">
    <property type="term" value="F:rRNA binding"/>
    <property type="evidence" value="ECO:0007669"/>
    <property type="project" value="UniProtKB-UniRule"/>
</dbReference>
<dbReference type="GO" id="GO:0003735">
    <property type="term" value="F:structural constituent of ribosome"/>
    <property type="evidence" value="ECO:0007669"/>
    <property type="project" value="InterPro"/>
</dbReference>
<dbReference type="GO" id="GO:0006412">
    <property type="term" value="P:translation"/>
    <property type="evidence" value="ECO:0007669"/>
    <property type="project" value="UniProtKB-UniRule"/>
</dbReference>
<dbReference type="FunFam" id="3.30.1370.30:FF:000002">
    <property type="entry name" value="30S ribosomal protein S8"/>
    <property type="match status" value="1"/>
</dbReference>
<dbReference type="FunFam" id="3.30.1490.10:FF:000001">
    <property type="entry name" value="30S ribosomal protein S8"/>
    <property type="match status" value="1"/>
</dbReference>
<dbReference type="Gene3D" id="3.30.1370.30">
    <property type="match status" value="1"/>
</dbReference>
<dbReference type="Gene3D" id="3.30.1490.10">
    <property type="match status" value="1"/>
</dbReference>
<dbReference type="HAMAP" id="MF_01302_B">
    <property type="entry name" value="Ribosomal_uS8_B"/>
    <property type="match status" value="1"/>
</dbReference>
<dbReference type="InterPro" id="IPR000630">
    <property type="entry name" value="Ribosomal_uS8"/>
</dbReference>
<dbReference type="InterPro" id="IPR047863">
    <property type="entry name" value="Ribosomal_uS8_CS"/>
</dbReference>
<dbReference type="InterPro" id="IPR035987">
    <property type="entry name" value="Ribosomal_uS8_sf"/>
</dbReference>
<dbReference type="NCBIfam" id="NF001109">
    <property type="entry name" value="PRK00136.1"/>
    <property type="match status" value="1"/>
</dbReference>
<dbReference type="PANTHER" id="PTHR11758">
    <property type="entry name" value="40S RIBOSOMAL PROTEIN S15A"/>
    <property type="match status" value="1"/>
</dbReference>
<dbReference type="Pfam" id="PF00410">
    <property type="entry name" value="Ribosomal_S8"/>
    <property type="match status" value="1"/>
</dbReference>
<dbReference type="SUPFAM" id="SSF56047">
    <property type="entry name" value="Ribosomal protein S8"/>
    <property type="match status" value="1"/>
</dbReference>
<dbReference type="PROSITE" id="PS00053">
    <property type="entry name" value="RIBOSOMAL_S8"/>
    <property type="match status" value="1"/>
</dbReference>
<reference key="1">
    <citation type="journal article" date="2006" name="PLoS Genet.">
        <title>Who ate whom? Adaptive Helicobacter genomic changes that accompanied a host jump from early humans to large felines.</title>
        <authorList>
            <person name="Eppinger M."/>
            <person name="Baar C."/>
            <person name="Linz B."/>
            <person name="Raddatz G."/>
            <person name="Lanz C."/>
            <person name="Keller H."/>
            <person name="Morelli G."/>
            <person name="Gressmann H."/>
            <person name="Achtman M."/>
            <person name="Schuster S.C."/>
        </authorList>
    </citation>
    <scope>NUCLEOTIDE SEQUENCE [LARGE SCALE GENOMIC DNA]</scope>
    <source>
        <strain>Sheeba</strain>
    </source>
</reference>
<name>RS8_HELAH</name>
<gene>
    <name evidence="1" type="primary">rpsH</name>
    <name type="ordered locus">Hac_0149</name>
</gene>
<keyword id="KW-0687">Ribonucleoprotein</keyword>
<keyword id="KW-0689">Ribosomal protein</keyword>
<keyword id="KW-0694">RNA-binding</keyword>
<keyword id="KW-0699">rRNA-binding</keyword>
<feature type="chain" id="PRO_0000290850" description="Small ribosomal subunit protein uS8">
    <location>
        <begin position="1"/>
        <end position="131"/>
    </location>
</feature>